<protein>
    <recommendedName>
        <fullName evidence="1">tRNA pseudouridine synthase A</fullName>
        <ecNumber evidence="1">5.4.99.12</ecNumber>
    </recommendedName>
    <alternativeName>
        <fullName evidence="1">tRNA pseudouridine(38-40) synthase</fullName>
    </alternativeName>
    <alternativeName>
        <fullName evidence="1">tRNA pseudouridylate synthase I</fullName>
    </alternativeName>
    <alternativeName>
        <fullName evidence="1">tRNA-uridine isomerase I</fullName>
    </alternativeName>
</protein>
<name>TRUA_NATPD</name>
<accession>Q3IMP6</accession>
<sequence>MRAFRIAYDGTGFRGFQRQPHGETVENALFEALSSLGVAFEDGRPPGYAAAGRTDAGVSARAQTVAFEAPAWLLPRALNGELPASVRAWAAADVGDAFHATHDATARAYRYFLYAPEPSADTTRARAACARLSGSHDFHNFTPDDRGTERTLSMRLRRQGPFLVVDCRAGGFARQLVRRLVAAVAAVARGERPLSFLGRALDDDPLSGADGIAAAPPEPLLLADVVYPGVEFTVDDRAAESARTVFATRRRQRLADARVAGALSPPE</sequence>
<gene>
    <name evidence="1" type="primary">truA</name>
    <name type="ordered locus">NP_5042A</name>
</gene>
<keyword id="KW-0413">Isomerase</keyword>
<keyword id="KW-1185">Reference proteome</keyword>
<keyword id="KW-0819">tRNA processing</keyword>
<reference key="1">
    <citation type="journal article" date="2005" name="Genome Res.">
        <title>Living with two extremes: conclusions from the genome sequence of Natronomonas pharaonis.</title>
        <authorList>
            <person name="Falb M."/>
            <person name="Pfeiffer F."/>
            <person name="Palm P."/>
            <person name="Rodewald K."/>
            <person name="Hickmann V."/>
            <person name="Tittor J."/>
            <person name="Oesterhelt D."/>
        </authorList>
    </citation>
    <scope>NUCLEOTIDE SEQUENCE [LARGE SCALE GENOMIC DNA]</scope>
    <source>
        <strain>ATCC 35678 / DSM 2160 / CIP 103997 / JCM 8858 / NBRC 14720 / NCIMB 2260 / Gabara</strain>
    </source>
</reference>
<proteinExistence type="inferred from homology"/>
<organism>
    <name type="scientific">Natronomonas pharaonis (strain ATCC 35678 / DSM 2160 / CIP 103997 / JCM 8858 / NBRC 14720 / NCIMB 2260 / Gabara)</name>
    <name type="common">Halobacterium pharaonis</name>
    <dbReference type="NCBI Taxonomy" id="348780"/>
    <lineage>
        <taxon>Archaea</taxon>
        <taxon>Methanobacteriati</taxon>
        <taxon>Methanobacteriota</taxon>
        <taxon>Stenosarchaea group</taxon>
        <taxon>Halobacteria</taxon>
        <taxon>Halobacteriales</taxon>
        <taxon>Haloarculaceae</taxon>
        <taxon>Natronomonas</taxon>
    </lineage>
</organism>
<feature type="chain" id="PRO_1000017120" description="tRNA pseudouridine synthase A">
    <location>
        <begin position="1"/>
        <end position="267"/>
    </location>
</feature>
<feature type="active site" description="Nucleophile" evidence="1">
    <location>
        <position position="55"/>
    </location>
</feature>
<feature type="binding site" evidence="1">
    <location>
        <position position="109"/>
    </location>
    <ligand>
        <name>substrate</name>
    </ligand>
</feature>
<comment type="function">
    <text evidence="1">Formation of pseudouridine at positions 38, 39 and 40 in the anticodon stem and loop of transfer RNAs.</text>
</comment>
<comment type="catalytic activity">
    <reaction evidence="1">
        <text>uridine(38/39/40) in tRNA = pseudouridine(38/39/40) in tRNA</text>
        <dbReference type="Rhea" id="RHEA:22376"/>
        <dbReference type="Rhea" id="RHEA-COMP:10085"/>
        <dbReference type="Rhea" id="RHEA-COMP:10087"/>
        <dbReference type="ChEBI" id="CHEBI:65314"/>
        <dbReference type="ChEBI" id="CHEBI:65315"/>
        <dbReference type="EC" id="5.4.99.12"/>
    </reaction>
</comment>
<comment type="similarity">
    <text evidence="1">Belongs to the tRNA pseudouridine synthase TruA family.</text>
</comment>
<evidence type="ECO:0000255" key="1">
    <source>
        <dbReference type="HAMAP-Rule" id="MF_00171"/>
    </source>
</evidence>
<dbReference type="EC" id="5.4.99.12" evidence="1"/>
<dbReference type="EMBL" id="CR936257">
    <property type="protein sequence ID" value="CAI50612.1"/>
    <property type="molecule type" value="Genomic_DNA"/>
</dbReference>
<dbReference type="RefSeq" id="WP_011324222.1">
    <property type="nucleotide sequence ID" value="NC_007426.1"/>
</dbReference>
<dbReference type="SMR" id="Q3IMP6"/>
<dbReference type="STRING" id="348780.NP_5042A"/>
<dbReference type="EnsemblBacteria" id="CAI50612">
    <property type="protein sequence ID" value="CAI50612"/>
    <property type="gene ID" value="NP_5042A"/>
</dbReference>
<dbReference type="GeneID" id="3703420"/>
<dbReference type="KEGG" id="nph:NP_5042A"/>
<dbReference type="eggNOG" id="arCOG04449">
    <property type="taxonomic scope" value="Archaea"/>
</dbReference>
<dbReference type="HOGENOM" id="CLU_014673_4_2_2"/>
<dbReference type="OrthoDB" id="25720at2157"/>
<dbReference type="Proteomes" id="UP000002698">
    <property type="component" value="Chromosome"/>
</dbReference>
<dbReference type="GO" id="GO:0003723">
    <property type="term" value="F:RNA binding"/>
    <property type="evidence" value="ECO:0007669"/>
    <property type="project" value="InterPro"/>
</dbReference>
<dbReference type="GO" id="GO:0160147">
    <property type="term" value="F:tRNA pseudouridine(38-40) synthase activity"/>
    <property type="evidence" value="ECO:0007669"/>
    <property type="project" value="UniProtKB-EC"/>
</dbReference>
<dbReference type="GO" id="GO:0031119">
    <property type="term" value="P:tRNA pseudouridine synthesis"/>
    <property type="evidence" value="ECO:0007669"/>
    <property type="project" value="UniProtKB-UniRule"/>
</dbReference>
<dbReference type="Gene3D" id="3.30.70.660">
    <property type="entry name" value="Pseudouridine synthase I, catalytic domain, C-terminal subdomain"/>
    <property type="match status" value="1"/>
</dbReference>
<dbReference type="Gene3D" id="3.30.70.580">
    <property type="entry name" value="Pseudouridine synthase I, catalytic domain, N-terminal subdomain"/>
    <property type="match status" value="1"/>
</dbReference>
<dbReference type="HAMAP" id="MF_00171">
    <property type="entry name" value="TruA"/>
    <property type="match status" value="1"/>
</dbReference>
<dbReference type="InterPro" id="IPR020103">
    <property type="entry name" value="PsdUridine_synth_cat_dom_sf"/>
</dbReference>
<dbReference type="InterPro" id="IPR001406">
    <property type="entry name" value="PsdUridine_synth_TruA"/>
</dbReference>
<dbReference type="InterPro" id="IPR020097">
    <property type="entry name" value="PsdUridine_synth_TruA_a/b_dom"/>
</dbReference>
<dbReference type="InterPro" id="IPR020095">
    <property type="entry name" value="PsdUridine_synth_TruA_C"/>
</dbReference>
<dbReference type="InterPro" id="IPR020094">
    <property type="entry name" value="TruA/RsuA/RluB/E/F_N"/>
</dbReference>
<dbReference type="NCBIfam" id="NF000622">
    <property type="entry name" value="PRK00021.3-3"/>
    <property type="match status" value="1"/>
</dbReference>
<dbReference type="PANTHER" id="PTHR11142">
    <property type="entry name" value="PSEUDOURIDYLATE SYNTHASE"/>
    <property type="match status" value="1"/>
</dbReference>
<dbReference type="PANTHER" id="PTHR11142:SF0">
    <property type="entry name" value="TRNA PSEUDOURIDINE SYNTHASE-LIKE 1"/>
    <property type="match status" value="1"/>
</dbReference>
<dbReference type="Pfam" id="PF01416">
    <property type="entry name" value="PseudoU_synth_1"/>
    <property type="match status" value="1"/>
</dbReference>
<dbReference type="PIRSF" id="PIRSF001430">
    <property type="entry name" value="tRNA_psdUrid_synth"/>
    <property type="match status" value="1"/>
</dbReference>
<dbReference type="SUPFAM" id="SSF55120">
    <property type="entry name" value="Pseudouridine synthase"/>
    <property type="match status" value="1"/>
</dbReference>